<feature type="chain" id="PRO_0000435965" description="D-xylose 1-dehydrogenase (NADP(+))">
    <location>
        <begin position="1"/>
        <end position="391"/>
    </location>
</feature>
<evidence type="ECO:0000269" key="1">
    <source>
    </source>
</evidence>
<evidence type="ECO:0000303" key="2">
    <source>
    </source>
</evidence>
<evidence type="ECO:0000305" key="3"/>
<evidence type="ECO:0000305" key="4">
    <source>
    </source>
</evidence>
<dbReference type="EC" id="1.1.1.179" evidence="1"/>
<dbReference type="EMBL" id="EF136590">
    <property type="protein sequence ID" value="ABO33081.1"/>
    <property type="molecule type" value="mRNA"/>
</dbReference>
<dbReference type="EMBL" id="KI911139">
    <property type="protein sequence ID" value="ETS06670.1"/>
    <property type="molecule type" value="Genomic_DNA"/>
</dbReference>
<dbReference type="SMR" id="A0A024SMV2"/>
<dbReference type="KEGG" id="trr:M419DRAFT_31971"/>
<dbReference type="HOGENOM" id="CLU_023194_7_2_1"/>
<dbReference type="OrthoDB" id="2665at5129"/>
<dbReference type="BRENDA" id="1.1.1.179">
    <property type="organism ID" value="6451"/>
</dbReference>
<dbReference type="SABIO-RK" id="A0A024SMV2"/>
<dbReference type="Proteomes" id="UP000024376">
    <property type="component" value="Unassembled WGS sequence"/>
</dbReference>
<dbReference type="GO" id="GO:0047837">
    <property type="term" value="F:D-xylose 1-dehydrogenase (NADP+) activity"/>
    <property type="evidence" value="ECO:0007669"/>
    <property type="project" value="UniProtKB-EC"/>
</dbReference>
<dbReference type="GO" id="GO:0000166">
    <property type="term" value="F:nucleotide binding"/>
    <property type="evidence" value="ECO:0007669"/>
    <property type="project" value="InterPro"/>
</dbReference>
<dbReference type="Gene3D" id="3.30.360.10">
    <property type="entry name" value="Dihydrodipicolinate Reductase, domain 2"/>
    <property type="match status" value="1"/>
</dbReference>
<dbReference type="Gene3D" id="3.40.50.720">
    <property type="entry name" value="NAD(P)-binding Rossmann-like Domain"/>
    <property type="match status" value="1"/>
</dbReference>
<dbReference type="InterPro" id="IPR000683">
    <property type="entry name" value="Gfo/Idh/MocA-like_OxRdtase_N"/>
</dbReference>
<dbReference type="InterPro" id="IPR050984">
    <property type="entry name" value="Gfo/Idh/MocA_domain"/>
</dbReference>
<dbReference type="InterPro" id="IPR055170">
    <property type="entry name" value="GFO_IDH_MocA-like_dom"/>
</dbReference>
<dbReference type="InterPro" id="IPR036291">
    <property type="entry name" value="NAD(P)-bd_dom_sf"/>
</dbReference>
<dbReference type="PANTHER" id="PTHR22604:SF115">
    <property type="entry name" value="DIHYDRODIOL DEHYDROGENASE, PUTATIVE (AFU_ORTHOLOGUE AFUA_1G07520)-RELATED"/>
    <property type="match status" value="1"/>
</dbReference>
<dbReference type="PANTHER" id="PTHR22604">
    <property type="entry name" value="OXIDOREDUCTASES"/>
    <property type="match status" value="1"/>
</dbReference>
<dbReference type="Pfam" id="PF01408">
    <property type="entry name" value="GFO_IDH_MocA"/>
    <property type="match status" value="1"/>
</dbReference>
<dbReference type="Pfam" id="PF22725">
    <property type="entry name" value="GFO_IDH_MocA_C3"/>
    <property type="match status" value="1"/>
</dbReference>
<dbReference type="SUPFAM" id="SSF55347">
    <property type="entry name" value="Glyceraldehyde-3-phosphate dehydrogenase-like, C-terminal domain"/>
    <property type="match status" value="1"/>
</dbReference>
<dbReference type="SUPFAM" id="SSF51735">
    <property type="entry name" value="NAD(P)-binding Rossmann-fold domains"/>
    <property type="match status" value="1"/>
</dbReference>
<protein>
    <recommendedName>
        <fullName evidence="4">D-xylose 1-dehydrogenase (NADP(+))</fullName>
        <shortName>XDH</shortName>
        <ecNumber evidence="1">1.1.1.179</ecNumber>
    </recommendedName>
    <alternativeName>
        <fullName>D-xylose-NADP dehydrogenase</fullName>
    </alternativeName>
    <alternativeName>
        <fullName evidence="2">NADP(+)-dependent D-xylose dehydrogenase</fullName>
    </alternativeName>
</protein>
<organism>
    <name type="scientific">Hypocrea jecorina (strain ATCC 56765 / BCRC 32924 / NRRL 11460 / Rut C-30)</name>
    <name type="common">Trichoderma reesei</name>
    <dbReference type="NCBI Taxonomy" id="1344414"/>
    <lineage>
        <taxon>Eukaryota</taxon>
        <taxon>Fungi</taxon>
        <taxon>Dikarya</taxon>
        <taxon>Ascomycota</taxon>
        <taxon>Pezizomycotina</taxon>
        <taxon>Sordariomycetes</taxon>
        <taxon>Hypocreomycetidae</taxon>
        <taxon>Hypocreales</taxon>
        <taxon>Hypocreaceae</taxon>
        <taxon>Trichoderma</taxon>
    </lineage>
</organism>
<keyword id="KW-0521">NADP</keyword>
<keyword id="KW-0560">Oxidoreductase</keyword>
<accession>A0A024SMV2</accession>
<accession>A8BT09</accession>
<gene>
    <name evidence="2" type="primary">xyd1</name>
    <name type="ORF">M419DRAFT_31971</name>
</gene>
<name>XDH_HYPJR</name>
<proteinExistence type="evidence at protein level"/>
<comment type="function">
    <text evidence="1">NADP-dependent D-xylose dehydrogenase catalyzing the oxydation of D-xylose into D-xylonolactone. Also displays some, albeit lower activity with D-glucose, D-galactose and L-arabinose as substrate. Probably not involved in D-xylose degradation, as it has been shown that H.jecorina assimilates D-xylose via D-xylose reductase and xylitol dehydrogenase, and it is unable to grow on D-xylonic acid as sole carbon source. May play a role in the regeneration of NADP(+) in the presence of D-xylose.</text>
</comment>
<comment type="catalytic activity">
    <reaction evidence="1">
        <text>D-xylose + NADP(+) = D-xylono-1,5-lactone + NADPH + H(+)</text>
        <dbReference type="Rhea" id="RHEA:22000"/>
        <dbReference type="ChEBI" id="CHEBI:15378"/>
        <dbReference type="ChEBI" id="CHEBI:15867"/>
        <dbReference type="ChEBI" id="CHEBI:53455"/>
        <dbReference type="ChEBI" id="CHEBI:57783"/>
        <dbReference type="ChEBI" id="CHEBI:58349"/>
        <dbReference type="EC" id="1.1.1.179"/>
    </reaction>
</comment>
<comment type="biophysicochemical properties">
    <kinetics>
        <KM evidence="1">250 uM for NADP(+)</KM>
        <KM evidence="1">43 mM for D-xylose</KM>
        <KM evidence="1">24 mM for D-glucose</KM>
        <KM evidence="1">60 mM for L-arabinose</KM>
        <KM evidence="1">100 mM for D-galactose</KM>
        <KM evidence="1">145 mM for D-ribose</KM>
        <KM evidence="1">390 mM for D-arabinose</KM>
        <Vmax evidence="1">510.0 nmol/sec/mg enzyme toward NADP(+)</Vmax>
        <Vmax evidence="1">500.0 nmol/sec/mg enzyme toward D-xylose</Vmax>
        <Vmax evidence="1">130.0 nmol/sec/mg enzyme toward D-glucose</Vmax>
        <Vmax evidence="1">117.0 nmol/sec/mg enzyme toward L-arabinose</Vmax>
        <Vmax evidence="1">205.0 nmol/sec/mg enzyme toward D-galactose</Vmax>
        <Vmax evidence="1">141.0 nmol/sec/mg enzyme toward D-ribose</Vmax>
        <Vmax evidence="1">100.0 nmol/sec/mg enzyme toward D-arabinose</Vmax>
    </kinetics>
</comment>
<comment type="similarity">
    <text evidence="3">Belongs to the Gfo/Idh/MocA family.</text>
</comment>
<reference key="1">
    <citation type="journal article" date="2007" name="FEMS Microbiol. Lett.">
        <title>Identification in the mould Hypocrea jecorina of a gene encoding an NADP(+): d-xylose dehydrogenase.</title>
        <authorList>
            <person name="Berghall S."/>
            <person name="Hilditch S."/>
            <person name="Penttila M."/>
            <person name="Richard P."/>
        </authorList>
    </citation>
    <scope>NUCLEOTIDE SEQUENCE [MRNA]</scope>
    <scope>FUNCTION</scope>
    <scope>CATALYTIC ACTIVITY</scope>
    <scope>BIOPHYSICOCHEMICAL PROPERTIES</scope>
    <source>
        <strain>ATCC 56765 / BCRC 32924 / NRRL 11460 / Rut C-30</strain>
    </source>
</reference>
<reference key="2">
    <citation type="journal article" date="2013" name="Ind. Biotechnol.">
        <title>Comparative genomics analysis of Trichoderma reesei strains.</title>
        <authorList>
            <person name="Koike H."/>
            <person name="Aerts A."/>
            <person name="LaButti K."/>
            <person name="Grigoriev I.V."/>
            <person name="Baker S.E."/>
        </authorList>
    </citation>
    <scope>NUCLEOTIDE SEQUENCE [LARGE SCALE GENOMIC DNA]</scope>
    <source>
        <strain>ATCC 56765 / BCRC 32924 / NRRL 11460 / Rut C-30</strain>
    </source>
</reference>
<sequence>MASGNPYTLKWGIMATGGIAETFCKDLLCNPAIRGADDVRHEIVAVASSSSSKRAEEFLQRIDGAFDAKTYGSYPELVADPNVDIVYVATPHSHHFQNTMLALEAGKNVLCEKAFTVTAAQARKLVETAKAKKLFLMEAVWTRYFPLSIKIRELIAAGEIGTVFRTIADLSINANSEQGQALKFADSHRMVNPDLAGGATLDLGVYPLTWVFQTLYHLQPEEDKEAPTVVASSNKYTTGADENTAIICSFPRHNSIGIASTTMRADTDPEKDTIPAVRIQGSKGEIQVFFPTYRPLKYKVVKTNGEAQTVDCPIPGDPARKGSGHGMFWEADECARCLRDGKLESATLPWKESIVIMETMEEALRQGGVTYPELITTDVYDPKSPLNTGNQ</sequence>